<feature type="signal peptide" evidence="2">
    <location>
        <begin position="1"/>
        <end position="24"/>
    </location>
</feature>
<feature type="chain" id="PRO_0000289634" description="WAP four-disulfide core domain protein 5">
    <location>
        <begin position="25"/>
        <end position="123"/>
    </location>
</feature>
<feature type="domain" description="WAP 1" evidence="3">
    <location>
        <begin position="27"/>
        <end position="73"/>
    </location>
</feature>
<feature type="domain" description="WAP 2" evidence="3">
    <location>
        <begin position="74"/>
        <end position="121"/>
    </location>
</feature>
<feature type="disulfide bond" evidence="3">
    <location>
        <begin position="34"/>
        <end position="62"/>
    </location>
</feature>
<feature type="disulfide bond" evidence="3">
    <location>
        <begin position="41"/>
        <end position="66"/>
    </location>
</feature>
<feature type="disulfide bond" evidence="3">
    <location>
        <begin position="49"/>
        <end position="61"/>
    </location>
</feature>
<feature type="disulfide bond" evidence="3">
    <location>
        <begin position="55"/>
        <end position="70"/>
    </location>
</feature>
<feature type="disulfide bond" evidence="3">
    <location>
        <begin position="81"/>
        <end position="109"/>
    </location>
</feature>
<feature type="disulfide bond" evidence="3">
    <location>
        <begin position="88"/>
        <end position="113"/>
    </location>
</feature>
<feature type="disulfide bond" evidence="3">
    <location>
        <begin position="96"/>
        <end position="108"/>
    </location>
</feature>
<feature type="disulfide bond" evidence="3">
    <location>
        <begin position="102"/>
        <end position="117"/>
    </location>
</feature>
<protein>
    <recommendedName>
        <fullName>WAP four-disulfide core domain protein 5</fullName>
    </recommendedName>
</protein>
<proteinExistence type="inferred from homology"/>
<dbReference type="EMBL" id="DP000044">
    <property type="protein sequence ID" value="ABO52975.1"/>
    <property type="molecule type" value="Genomic_DNA"/>
</dbReference>
<dbReference type="RefSeq" id="XP_008994238.1">
    <property type="nucleotide sequence ID" value="XM_008995990.1"/>
</dbReference>
<dbReference type="SMR" id="A4K2U0"/>
<dbReference type="STRING" id="9483.ENSCJAP00000032377"/>
<dbReference type="GeneID" id="100399295"/>
<dbReference type="KEGG" id="cjc:100399295"/>
<dbReference type="CTD" id="149708"/>
<dbReference type="eggNOG" id="ENOG502S99V">
    <property type="taxonomic scope" value="Eukaryota"/>
</dbReference>
<dbReference type="HOGENOM" id="CLU_105901_2_0_1"/>
<dbReference type="InParanoid" id="A4K2U0"/>
<dbReference type="OrthoDB" id="4473401at2759"/>
<dbReference type="TreeFam" id="TF338375"/>
<dbReference type="Proteomes" id="UP000008225">
    <property type="component" value="Unplaced"/>
</dbReference>
<dbReference type="GO" id="GO:0005615">
    <property type="term" value="C:extracellular space"/>
    <property type="evidence" value="ECO:0007669"/>
    <property type="project" value="TreeGrafter"/>
</dbReference>
<dbReference type="GO" id="GO:0004867">
    <property type="term" value="F:serine-type endopeptidase inhibitor activity"/>
    <property type="evidence" value="ECO:0007669"/>
    <property type="project" value="UniProtKB-KW"/>
</dbReference>
<dbReference type="GO" id="GO:0019731">
    <property type="term" value="P:antibacterial humoral response"/>
    <property type="evidence" value="ECO:0007669"/>
    <property type="project" value="TreeGrafter"/>
</dbReference>
<dbReference type="GO" id="GO:0045087">
    <property type="term" value="P:innate immune response"/>
    <property type="evidence" value="ECO:0007669"/>
    <property type="project" value="TreeGrafter"/>
</dbReference>
<dbReference type="Gene3D" id="4.10.75.10">
    <property type="entry name" value="Elafin-like"/>
    <property type="match status" value="2"/>
</dbReference>
<dbReference type="InterPro" id="IPR036645">
    <property type="entry name" value="Elafin-like_sf"/>
</dbReference>
<dbReference type="InterPro" id="IPR008197">
    <property type="entry name" value="WAP_dom"/>
</dbReference>
<dbReference type="InterPro" id="IPR050514">
    <property type="entry name" value="WAP_four-disulfide_core"/>
</dbReference>
<dbReference type="PANTHER" id="PTHR19441:SF39">
    <property type="entry name" value="WAP FOUR-DISULFIDE CORE DOMAIN PROTEIN 5"/>
    <property type="match status" value="1"/>
</dbReference>
<dbReference type="PANTHER" id="PTHR19441">
    <property type="entry name" value="WHEY ACDIC PROTEIN WAP"/>
    <property type="match status" value="1"/>
</dbReference>
<dbReference type="Pfam" id="PF00095">
    <property type="entry name" value="WAP"/>
    <property type="match status" value="2"/>
</dbReference>
<dbReference type="PRINTS" id="PR00003">
    <property type="entry name" value="4DISULPHCORE"/>
</dbReference>
<dbReference type="SMART" id="SM00217">
    <property type="entry name" value="WAP"/>
    <property type="match status" value="2"/>
</dbReference>
<dbReference type="SUPFAM" id="SSF57256">
    <property type="entry name" value="Elafin-like"/>
    <property type="match status" value="2"/>
</dbReference>
<dbReference type="PROSITE" id="PS51390">
    <property type="entry name" value="WAP"/>
    <property type="match status" value="2"/>
</dbReference>
<comment type="function">
    <text evidence="1">Putative acid-stable proteinase inhibitor.</text>
</comment>
<comment type="subcellular location">
    <subcellularLocation>
        <location evidence="4">Secreted</location>
    </subcellularLocation>
</comment>
<accession>A4K2U0</accession>
<reference key="1">
    <citation type="journal article" date="2007" name="Genome Res.">
        <title>Comparative sequence analyses reveal rapid and divergent evolutionary changes of the WFDC locus in the primate lineage.</title>
        <authorList>
            <consortium name="NISC comparative sequencing program"/>
            <person name="Hurle B."/>
            <person name="Swanson W."/>
            <person name="Green E.D."/>
        </authorList>
    </citation>
    <scope>NUCLEOTIDE SEQUENCE [GENOMIC DNA]</scope>
</reference>
<keyword id="KW-1015">Disulfide bond</keyword>
<keyword id="KW-0646">Protease inhibitor</keyword>
<keyword id="KW-1185">Reference proteome</keyword>
<keyword id="KW-0677">Repeat</keyword>
<keyword id="KW-0964">Secreted</keyword>
<keyword id="KW-0722">Serine protease inhibitor</keyword>
<keyword id="KW-0732">Signal</keyword>
<name>WFDC5_CALJA</name>
<organism>
    <name type="scientific">Callithrix jacchus</name>
    <name type="common">White-tufted-ear marmoset</name>
    <dbReference type="NCBI Taxonomy" id="9483"/>
    <lineage>
        <taxon>Eukaryota</taxon>
        <taxon>Metazoa</taxon>
        <taxon>Chordata</taxon>
        <taxon>Craniata</taxon>
        <taxon>Vertebrata</taxon>
        <taxon>Euteleostomi</taxon>
        <taxon>Mammalia</taxon>
        <taxon>Eutheria</taxon>
        <taxon>Euarchontoglires</taxon>
        <taxon>Primates</taxon>
        <taxon>Haplorrhini</taxon>
        <taxon>Platyrrhini</taxon>
        <taxon>Cebidae</taxon>
        <taxon>Callitrichinae</taxon>
        <taxon>Callithrix</taxon>
        <taxon>Callithrix</taxon>
    </lineage>
</organism>
<gene>
    <name type="primary">WFDC5</name>
</gene>
<evidence type="ECO:0000250" key="1"/>
<evidence type="ECO:0000255" key="2"/>
<evidence type="ECO:0000255" key="3">
    <source>
        <dbReference type="PROSITE-ProRule" id="PRU00722"/>
    </source>
</evidence>
<evidence type="ECO:0000305" key="4"/>
<sequence>MRIQSLLLLGVLLAVGSQLPAAFGRKKGEKSGRCPPDDGPCLLSVPDQCMEDSQCPFTRKCCYRACFRQCVPRISVKLGSCPEDQLQCLSPMNHLCHKDADCSGKKRCCPSACGRDCRDPARG</sequence>